<organism>
    <name type="scientific">Cryptococcus neoformans var. neoformans serotype D (strain JEC21 / ATCC MYA-565)</name>
    <name type="common">Filobasidiella neoformans</name>
    <dbReference type="NCBI Taxonomy" id="214684"/>
    <lineage>
        <taxon>Eukaryota</taxon>
        <taxon>Fungi</taxon>
        <taxon>Dikarya</taxon>
        <taxon>Basidiomycota</taxon>
        <taxon>Agaricomycotina</taxon>
        <taxon>Tremellomycetes</taxon>
        <taxon>Tremellales</taxon>
        <taxon>Cryptococcaceae</taxon>
        <taxon>Cryptococcus</taxon>
        <taxon>Cryptococcus neoformans species complex</taxon>
    </lineage>
</organism>
<keyword id="KW-0472">Membrane</keyword>
<keyword id="KW-0496">Mitochondrion</keyword>
<keyword id="KW-1000">Mitochondrion outer membrane</keyword>
<keyword id="KW-1185">Reference proteome</keyword>
<keyword id="KW-0677">Repeat</keyword>
<keyword id="KW-0802">TPR repeat</keyword>
<keyword id="KW-0812">Transmembrane</keyword>
<keyword id="KW-1133">Transmembrane helix</keyword>
<reference key="1">
    <citation type="journal article" date="2005" name="Science">
        <title>The genome of the basidiomycetous yeast and human pathogen Cryptococcus neoformans.</title>
        <authorList>
            <person name="Loftus B.J."/>
            <person name="Fung E."/>
            <person name="Roncaglia P."/>
            <person name="Rowley D."/>
            <person name="Amedeo P."/>
            <person name="Bruno D."/>
            <person name="Vamathevan J."/>
            <person name="Miranda M."/>
            <person name="Anderson I.J."/>
            <person name="Fraser J.A."/>
            <person name="Allen J.E."/>
            <person name="Bosdet I.E."/>
            <person name="Brent M.R."/>
            <person name="Chiu R."/>
            <person name="Doering T.L."/>
            <person name="Donlin M.J."/>
            <person name="D'Souza C.A."/>
            <person name="Fox D.S."/>
            <person name="Grinberg V."/>
            <person name="Fu J."/>
            <person name="Fukushima M."/>
            <person name="Haas B.J."/>
            <person name="Huang J.C."/>
            <person name="Janbon G."/>
            <person name="Jones S.J.M."/>
            <person name="Koo H.L."/>
            <person name="Krzywinski M.I."/>
            <person name="Kwon-Chung K.J."/>
            <person name="Lengeler K.B."/>
            <person name="Maiti R."/>
            <person name="Marra M.A."/>
            <person name="Marra R.E."/>
            <person name="Mathewson C.A."/>
            <person name="Mitchell T.G."/>
            <person name="Pertea M."/>
            <person name="Riggs F.R."/>
            <person name="Salzberg S.L."/>
            <person name="Schein J.E."/>
            <person name="Shvartsbeyn A."/>
            <person name="Shin H."/>
            <person name="Shumway M."/>
            <person name="Specht C.A."/>
            <person name="Suh B.B."/>
            <person name="Tenney A."/>
            <person name="Utterback T.R."/>
            <person name="Wickes B.L."/>
            <person name="Wortman J.R."/>
            <person name="Wye N.H."/>
            <person name="Kronstad J.W."/>
            <person name="Lodge J.K."/>
            <person name="Heitman J."/>
            <person name="Davis R.W."/>
            <person name="Fraser C.M."/>
            <person name="Hyman R.W."/>
        </authorList>
    </citation>
    <scope>NUCLEOTIDE SEQUENCE [LARGE SCALE GENOMIC DNA]</scope>
    <source>
        <strain>JEC21 / ATCC MYA-565</strain>
    </source>
</reference>
<feature type="chain" id="PRO_0000256183" description="Mitochondrial fission 1 protein">
    <location>
        <begin position="1"/>
        <end position="154"/>
    </location>
</feature>
<feature type="topological domain" description="Cytoplasmic" evidence="2">
    <location>
        <begin position="1"/>
        <end position="127"/>
    </location>
</feature>
<feature type="transmembrane region" description="Helical" evidence="2">
    <location>
        <begin position="128"/>
        <end position="148"/>
    </location>
</feature>
<feature type="topological domain" description="Mitochondrial intermembrane" evidence="2">
    <location>
        <begin position="149"/>
        <end position="154"/>
    </location>
</feature>
<feature type="repeat" description="TPR">
    <location>
        <begin position="76"/>
        <end position="109"/>
    </location>
</feature>
<accession>P0CN70</accession>
<accession>Q55SZ9</accession>
<accession>Q5KHD1</accession>
<proteinExistence type="inferred from homology"/>
<comment type="function">
    <text evidence="1">Has a role in mitochondrial fission. Has a role in outer membrane fission but not matrix separation (By similarity).</text>
</comment>
<comment type="subcellular location">
    <subcellularLocation>
        <location evidence="1">Mitochondrion outer membrane</location>
        <topology evidence="1">Single-pass membrane protein</topology>
    </subcellularLocation>
</comment>
<comment type="domain">
    <text evidence="1">The C-terminus is required for mitochondrial localization, while the N-terminus is necessary for mitochondrial fission.</text>
</comment>
<comment type="similarity">
    <text evidence="3">Belongs to the FIS1 family.</text>
</comment>
<evidence type="ECO:0000250" key="1"/>
<evidence type="ECO:0000255" key="2"/>
<evidence type="ECO:0000305" key="3"/>
<sequence>MPTDLPYAAEAESSLSPDELEVLRRQYYREIEQGHVTIQSKFNYGWGLIKSPSPELETEGVKLLQEIYSASPDHRRECTYYIAVGYYKLRNYAYARKFNNLLLSVEPGNMQAQSLSTLIENAVKRDGLVGIGMITGAVAVVGLIAGSVWKRSRR</sequence>
<name>FIS1_CRYNJ</name>
<gene>
    <name type="primary">FIS1</name>
    <name type="ordered locus">CNE00460</name>
</gene>
<protein>
    <recommendedName>
        <fullName>Mitochondrial fission 1 protein</fullName>
    </recommendedName>
</protein>
<dbReference type="EMBL" id="AE017345">
    <property type="protein sequence ID" value="AAW43445.2"/>
    <property type="molecule type" value="Genomic_DNA"/>
</dbReference>
<dbReference type="RefSeq" id="XP_570752.1">
    <property type="nucleotide sequence ID" value="XM_570752.1"/>
</dbReference>
<dbReference type="SMR" id="P0CN70"/>
<dbReference type="FunCoup" id="P0CN70">
    <property type="interactions" value="214"/>
</dbReference>
<dbReference type="STRING" id="214684.P0CN70"/>
<dbReference type="PaxDb" id="214684-P0CN70"/>
<dbReference type="EnsemblFungi" id="AAW43445">
    <property type="protein sequence ID" value="AAW43445"/>
    <property type="gene ID" value="CNE00460"/>
</dbReference>
<dbReference type="VEuPathDB" id="FungiDB:CNE00460"/>
<dbReference type="eggNOG" id="KOG3364">
    <property type="taxonomic scope" value="Eukaryota"/>
</dbReference>
<dbReference type="InParanoid" id="P0CN70"/>
<dbReference type="OrthoDB" id="421154at2759"/>
<dbReference type="Proteomes" id="UP000002149">
    <property type="component" value="Chromosome 5"/>
</dbReference>
<dbReference type="GO" id="GO:0005741">
    <property type="term" value="C:mitochondrial outer membrane"/>
    <property type="evidence" value="ECO:0000318"/>
    <property type="project" value="GO_Central"/>
</dbReference>
<dbReference type="GO" id="GO:0005778">
    <property type="term" value="C:peroxisomal membrane"/>
    <property type="evidence" value="ECO:0000318"/>
    <property type="project" value="GO_Central"/>
</dbReference>
<dbReference type="GO" id="GO:0008289">
    <property type="term" value="F:lipid binding"/>
    <property type="evidence" value="ECO:0000318"/>
    <property type="project" value="GO_Central"/>
</dbReference>
<dbReference type="GO" id="GO:0060090">
    <property type="term" value="F:molecular adaptor activity"/>
    <property type="evidence" value="ECO:0000318"/>
    <property type="project" value="GO_Central"/>
</dbReference>
<dbReference type="GO" id="GO:0000266">
    <property type="term" value="P:mitochondrial fission"/>
    <property type="evidence" value="ECO:0000318"/>
    <property type="project" value="GO_Central"/>
</dbReference>
<dbReference type="GO" id="GO:0016559">
    <property type="term" value="P:peroxisome fission"/>
    <property type="evidence" value="ECO:0000318"/>
    <property type="project" value="GO_Central"/>
</dbReference>
<dbReference type="CDD" id="cd12212">
    <property type="entry name" value="Fis1"/>
    <property type="match status" value="1"/>
</dbReference>
<dbReference type="FunFam" id="1.25.40.10:FF:001250">
    <property type="entry name" value="Mitochondrial fission 1 protein"/>
    <property type="match status" value="1"/>
</dbReference>
<dbReference type="Gene3D" id="1.25.40.10">
    <property type="entry name" value="Tetratricopeptide repeat domain"/>
    <property type="match status" value="1"/>
</dbReference>
<dbReference type="InterPro" id="IPR016543">
    <property type="entry name" value="Fis1"/>
</dbReference>
<dbReference type="InterPro" id="IPR033745">
    <property type="entry name" value="Fis1_cytosol"/>
</dbReference>
<dbReference type="InterPro" id="IPR028061">
    <property type="entry name" value="Fis1_TPR_C"/>
</dbReference>
<dbReference type="InterPro" id="IPR028058">
    <property type="entry name" value="Fis1_TPR_N"/>
</dbReference>
<dbReference type="InterPro" id="IPR011990">
    <property type="entry name" value="TPR-like_helical_dom_sf"/>
</dbReference>
<dbReference type="PANTHER" id="PTHR13247:SF0">
    <property type="entry name" value="MITOCHONDRIAL FISSION 1 PROTEIN"/>
    <property type="match status" value="1"/>
</dbReference>
<dbReference type="PANTHER" id="PTHR13247">
    <property type="entry name" value="TETRATRICOPEPTIDE REPEAT PROTEIN 11 TPR REPEAT PROTEIN 11"/>
    <property type="match status" value="1"/>
</dbReference>
<dbReference type="Pfam" id="PF14853">
    <property type="entry name" value="Fis1_TPR_C"/>
    <property type="match status" value="1"/>
</dbReference>
<dbReference type="Pfam" id="PF14852">
    <property type="entry name" value="Fis1_TPR_N"/>
    <property type="match status" value="1"/>
</dbReference>
<dbReference type="PIRSF" id="PIRSF008835">
    <property type="entry name" value="TPR_repeat_11_Fis1"/>
    <property type="match status" value="1"/>
</dbReference>
<dbReference type="SUPFAM" id="SSF48452">
    <property type="entry name" value="TPR-like"/>
    <property type="match status" value="1"/>
</dbReference>